<proteinExistence type="inferred from homology"/>
<dbReference type="EMBL" id="X77249">
    <property type="protein sequence ID" value="CAA54465.1"/>
    <property type="molecule type" value="Genomic_DNA"/>
</dbReference>
<dbReference type="EMBL" id="AE007317">
    <property type="protein sequence ID" value="AAK99511.1"/>
    <property type="status" value="ALT_INIT"/>
    <property type="molecule type" value="Genomic_DNA"/>
</dbReference>
<dbReference type="PIR" id="S49544">
    <property type="entry name" value="S49544"/>
</dbReference>
<dbReference type="RefSeq" id="NP_358301.1">
    <property type="nucleotide sequence ID" value="NC_003098.1"/>
</dbReference>
<dbReference type="RefSeq" id="WP_000590640.1">
    <property type="nucleotide sequence ID" value="NC_003098.1"/>
</dbReference>
<dbReference type="SMR" id="P0A4H8"/>
<dbReference type="STRING" id="171101.spr0707"/>
<dbReference type="GeneID" id="45653831"/>
<dbReference type="KEGG" id="spr:spr0707"/>
<dbReference type="PATRIC" id="fig|171101.6.peg.783"/>
<dbReference type="eggNOG" id="COG0745">
    <property type="taxonomic scope" value="Bacteria"/>
</dbReference>
<dbReference type="HOGENOM" id="CLU_000445_30_1_9"/>
<dbReference type="Proteomes" id="UP000000586">
    <property type="component" value="Chromosome"/>
</dbReference>
<dbReference type="GO" id="GO:0005829">
    <property type="term" value="C:cytosol"/>
    <property type="evidence" value="ECO:0000318"/>
    <property type="project" value="GO_Central"/>
</dbReference>
<dbReference type="GO" id="GO:0032993">
    <property type="term" value="C:protein-DNA complex"/>
    <property type="evidence" value="ECO:0000318"/>
    <property type="project" value="GO_Central"/>
</dbReference>
<dbReference type="GO" id="GO:0000156">
    <property type="term" value="F:phosphorelay response regulator activity"/>
    <property type="evidence" value="ECO:0000318"/>
    <property type="project" value="GO_Central"/>
</dbReference>
<dbReference type="GO" id="GO:0000976">
    <property type="term" value="F:transcription cis-regulatory region binding"/>
    <property type="evidence" value="ECO:0000318"/>
    <property type="project" value="GO_Central"/>
</dbReference>
<dbReference type="GO" id="GO:0030420">
    <property type="term" value="P:establishment of competence for transformation"/>
    <property type="evidence" value="ECO:0007669"/>
    <property type="project" value="UniProtKB-KW"/>
</dbReference>
<dbReference type="GO" id="GO:0006355">
    <property type="term" value="P:regulation of DNA-templated transcription"/>
    <property type="evidence" value="ECO:0000318"/>
    <property type="project" value="GO_Central"/>
</dbReference>
<dbReference type="CDD" id="cd00383">
    <property type="entry name" value="trans_reg_C"/>
    <property type="match status" value="1"/>
</dbReference>
<dbReference type="FunFam" id="1.10.10.10:FF:000535">
    <property type="entry name" value="DNA-binding response regulator CiaR"/>
    <property type="match status" value="1"/>
</dbReference>
<dbReference type="FunFam" id="3.40.50.2300:FF:000143">
    <property type="entry name" value="DNA-binding response regulator CiaR"/>
    <property type="match status" value="1"/>
</dbReference>
<dbReference type="Gene3D" id="3.40.50.2300">
    <property type="match status" value="1"/>
</dbReference>
<dbReference type="Gene3D" id="6.10.250.690">
    <property type="match status" value="1"/>
</dbReference>
<dbReference type="Gene3D" id="1.10.10.10">
    <property type="entry name" value="Winged helix-like DNA-binding domain superfamily/Winged helix DNA-binding domain"/>
    <property type="match status" value="1"/>
</dbReference>
<dbReference type="InterPro" id="IPR011006">
    <property type="entry name" value="CheY-like_superfamily"/>
</dbReference>
<dbReference type="InterPro" id="IPR001867">
    <property type="entry name" value="OmpR/PhoB-type_DNA-bd"/>
</dbReference>
<dbReference type="InterPro" id="IPR001789">
    <property type="entry name" value="Sig_transdc_resp-reg_receiver"/>
</dbReference>
<dbReference type="InterPro" id="IPR039420">
    <property type="entry name" value="WalR-like"/>
</dbReference>
<dbReference type="InterPro" id="IPR036388">
    <property type="entry name" value="WH-like_DNA-bd_sf"/>
</dbReference>
<dbReference type="PANTHER" id="PTHR48111">
    <property type="entry name" value="REGULATOR OF RPOS"/>
    <property type="match status" value="1"/>
</dbReference>
<dbReference type="PANTHER" id="PTHR48111:SF22">
    <property type="entry name" value="REGULATOR OF RPOS"/>
    <property type="match status" value="1"/>
</dbReference>
<dbReference type="Pfam" id="PF00072">
    <property type="entry name" value="Response_reg"/>
    <property type="match status" value="1"/>
</dbReference>
<dbReference type="Pfam" id="PF00486">
    <property type="entry name" value="Trans_reg_C"/>
    <property type="match status" value="1"/>
</dbReference>
<dbReference type="SMART" id="SM00448">
    <property type="entry name" value="REC"/>
    <property type="match status" value="1"/>
</dbReference>
<dbReference type="SMART" id="SM00862">
    <property type="entry name" value="Trans_reg_C"/>
    <property type="match status" value="1"/>
</dbReference>
<dbReference type="SUPFAM" id="SSF52172">
    <property type="entry name" value="CheY-like"/>
    <property type="match status" value="1"/>
</dbReference>
<dbReference type="PROSITE" id="PS51755">
    <property type="entry name" value="OMPR_PHOB"/>
    <property type="match status" value="1"/>
</dbReference>
<dbReference type="PROSITE" id="PS50110">
    <property type="entry name" value="RESPONSE_REGULATORY"/>
    <property type="match status" value="1"/>
</dbReference>
<gene>
    <name type="primary">ciaR</name>
    <name type="ordered locus">spr0707</name>
</gene>
<comment type="function">
    <text>Member of the two-component regulatory system CiaH/CiaR. Involved in early steps of competence regulation and in penicillin susceptibility.</text>
</comment>
<comment type="subcellular location">
    <subcellularLocation>
        <location evidence="3">Cytoplasm</location>
    </subcellularLocation>
</comment>
<comment type="PTM">
    <text evidence="3">Phosphorylated by CiaH.</text>
</comment>
<comment type="sequence caution" evidence="3">
    <conflict type="erroneous initiation">
        <sequence resource="EMBL-CDS" id="AAK99511"/>
    </conflict>
</comment>
<feature type="chain" id="PRO_0000081062" description="Transcriptional regulatory protein CiaR">
    <location>
        <begin position="1"/>
        <end position="224"/>
    </location>
</feature>
<feature type="domain" description="Response regulatory" evidence="1">
    <location>
        <begin position="3"/>
        <end position="116"/>
    </location>
</feature>
<feature type="DNA-binding region" description="OmpR/PhoB-type" evidence="2">
    <location>
        <begin position="124"/>
        <end position="222"/>
    </location>
</feature>
<feature type="modified residue" description="4-aspartylphosphate" evidence="1">
    <location>
        <position position="51"/>
    </location>
</feature>
<accession>P0A4H8</accession>
<accession>Q54954</accession>
<name>CIAR_STRR6</name>
<protein>
    <recommendedName>
        <fullName>Transcriptional regulatory protein CiaR</fullName>
    </recommendedName>
</protein>
<evidence type="ECO:0000255" key="1">
    <source>
        <dbReference type="PROSITE-ProRule" id="PRU00169"/>
    </source>
</evidence>
<evidence type="ECO:0000255" key="2">
    <source>
        <dbReference type="PROSITE-ProRule" id="PRU01091"/>
    </source>
</evidence>
<evidence type="ECO:0000305" key="3"/>
<keyword id="KW-0178">Competence</keyword>
<keyword id="KW-0963">Cytoplasm</keyword>
<keyword id="KW-0238">DNA-binding</keyword>
<keyword id="KW-0597">Phosphoprotein</keyword>
<keyword id="KW-1185">Reference proteome</keyword>
<keyword id="KW-0804">Transcription</keyword>
<keyword id="KW-0805">Transcription regulation</keyword>
<keyword id="KW-0902">Two-component regulatory system</keyword>
<organism>
    <name type="scientific">Streptococcus pneumoniae (strain ATCC BAA-255 / R6)</name>
    <dbReference type="NCBI Taxonomy" id="171101"/>
    <lineage>
        <taxon>Bacteria</taxon>
        <taxon>Bacillati</taxon>
        <taxon>Bacillota</taxon>
        <taxon>Bacilli</taxon>
        <taxon>Lactobacillales</taxon>
        <taxon>Streptococcaceae</taxon>
        <taxon>Streptococcus</taxon>
    </lineage>
</organism>
<sequence length="224" mass="25466">MIKILLVEDDLGLSNSVFDFLDDFADVMQVFDGEEGLYEAESGVYDLILLDLMLPEKNGFQVLKELREKGITTPVLIMTAKESLDDKGHGFELGADDYLTKPFYLEELKMRIQALLKRSGKFNENTLTYGNIVVNLSTNTVKVEDTPVELLGKEFDLLVYFLQNQNVILPKTQIFDRLWGFDSDTTISVVEVYVSKVRKKLKGTTFAENLQTLRSVGYLLKDVQ</sequence>
<reference key="1">
    <citation type="journal article" date="1994" name="Mol. Microbiol.">
        <title>A two-component signal-transducing system is involved in competence and penicillin susceptibility in laboratory mutants of Streptococcus pneumoniae.</title>
        <authorList>
            <person name="Guenzi E."/>
            <person name="Gasc A.M."/>
            <person name="Sicard M.A."/>
            <person name="Hakenbeck R."/>
        </authorList>
    </citation>
    <scope>NUCLEOTIDE SEQUENCE [GENOMIC DNA]</scope>
</reference>
<reference key="2">
    <citation type="journal article" date="2001" name="J. Bacteriol.">
        <title>Genome of the bacterium Streptococcus pneumoniae strain R6.</title>
        <authorList>
            <person name="Hoskins J."/>
            <person name="Alborn W.E. Jr."/>
            <person name="Arnold J."/>
            <person name="Blaszczak L.C."/>
            <person name="Burgett S."/>
            <person name="DeHoff B.S."/>
            <person name="Estrem S.T."/>
            <person name="Fritz L."/>
            <person name="Fu D.-J."/>
            <person name="Fuller W."/>
            <person name="Geringer C."/>
            <person name="Gilmour R."/>
            <person name="Glass J.S."/>
            <person name="Khoja H."/>
            <person name="Kraft A.R."/>
            <person name="Lagace R.E."/>
            <person name="LeBlanc D.J."/>
            <person name="Lee L.N."/>
            <person name="Lefkowitz E.J."/>
            <person name="Lu J."/>
            <person name="Matsushima P."/>
            <person name="McAhren S.M."/>
            <person name="McHenney M."/>
            <person name="McLeaster K."/>
            <person name="Mundy C.W."/>
            <person name="Nicas T.I."/>
            <person name="Norris F.H."/>
            <person name="O'Gara M."/>
            <person name="Peery R.B."/>
            <person name="Robertson G.T."/>
            <person name="Rockey P."/>
            <person name="Sun P.-M."/>
            <person name="Winkler M.E."/>
            <person name="Yang Y."/>
            <person name="Young-Bellido M."/>
            <person name="Zhao G."/>
            <person name="Zook C.A."/>
            <person name="Baltz R.H."/>
            <person name="Jaskunas S.R."/>
            <person name="Rosteck P.R. Jr."/>
            <person name="Skatrud P.L."/>
            <person name="Glass J.I."/>
        </authorList>
    </citation>
    <scope>NUCLEOTIDE SEQUENCE [LARGE SCALE GENOMIC DNA]</scope>
    <source>
        <strain>ATCC BAA-255 / R6</strain>
    </source>
</reference>